<gene>
    <name evidence="1" type="primary">mal3</name>
    <name type="ORF">AAEL011729</name>
</gene>
<feature type="chain" id="PRO_0000369366" description="Molybdenum cofactor sulfurase 3">
    <location>
        <begin position="1"/>
        <end position="764"/>
    </location>
</feature>
<feature type="domain" description="MOSC" evidence="1">
    <location>
        <begin position="607"/>
        <end position="762"/>
    </location>
</feature>
<feature type="active site" evidence="1">
    <location>
        <position position="394"/>
    </location>
</feature>
<feature type="modified residue" description="N6-(pyridoxal phosphate)lysine" evidence="1">
    <location>
        <position position="228"/>
    </location>
</feature>
<dbReference type="EC" id="2.8.1.9" evidence="1"/>
<dbReference type="EMBL" id="CH477791">
    <property type="protein sequence ID" value="EAT36178.1"/>
    <property type="molecule type" value="Genomic_DNA"/>
</dbReference>
<dbReference type="RefSeq" id="XP_001661859.1">
    <property type="nucleotide sequence ID" value="XM_001661809.1"/>
</dbReference>
<dbReference type="SMR" id="Q16P90"/>
<dbReference type="FunCoup" id="Q16P90">
    <property type="interactions" value="148"/>
</dbReference>
<dbReference type="STRING" id="7159.Q16P90"/>
<dbReference type="PaxDb" id="7159-AAEL011729-PA"/>
<dbReference type="VEuPathDB" id="VectorBase:AAEL022615"/>
<dbReference type="eggNOG" id="KOG2142">
    <property type="taxonomic scope" value="Eukaryota"/>
</dbReference>
<dbReference type="HOGENOM" id="CLU_010913_0_1_1"/>
<dbReference type="InParanoid" id="Q16P90"/>
<dbReference type="OMA" id="PCTRCQM"/>
<dbReference type="PhylomeDB" id="Q16P90"/>
<dbReference type="Proteomes" id="UP000008820">
    <property type="component" value="Unassembled WGS sequence"/>
</dbReference>
<dbReference type="Proteomes" id="UP000682892">
    <property type="component" value="Unassembled WGS sequence"/>
</dbReference>
<dbReference type="GO" id="GO:0016829">
    <property type="term" value="F:lyase activity"/>
    <property type="evidence" value="ECO:0007669"/>
    <property type="project" value="UniProtKB-UniRule"/>
</dbReference>
<dbReference type="GO" id="GO:0008265">
    <property type="term" value="F:molybdenum cofactor sulfurtransferase activity"/>
    <property type="evidence" value="ECO:0000250"/>
    <property type="project" value="UniProtKB"/>
</dbReference>
<dbReference type="GO" id="GO:0030151">
    <property type="term" value="F:molybdenum ion binding"/>
    <property type="evidence" value="ECO:0007669"/>
    <property type="project" value="UniProtKB-UniRule"/>
</dbReference>
<dbReference type="GO" id="GO:0030170">
    <property type="term" value="F:pyridoxal phosphate binding"/>
    <property type="evidence" value="ECO:0007669"/>
    <property type="project" value="UniProtKB-UniRule"/>
</dbReference>
<dbReference type="GO" id="GO:0006777">
    <property type="term" value="P:Mo-molybdopterin cofactor biosynthetic process"/>
    <property type="evidence" value="ECO:0007669"/>
    <property type="project" value="UniProtKB-UniRule"/>
</dbReference>
<dbReference type="GO" id="GO:0043545">
    <property type="term" value="P:molybdopterin cofactor metabolic process"/>
    <property type="evidence" value="ECO:0000250"/>
    <property type="project" value="UniProtKB"/>
</dbReference>
<dbReference type="FunFam" id="3.40.640.10:FF:000119">
    <property type="entry name" value="Molybdenum cofactor sulfurase"/>
    <property type="match status" value="1"/>
</dbReference>
<dbReference type="FunFam" id="3.90.1150.10:FF:000079">
    <property type="entry name" value="Molybdenum cofactor sulfurase"/>
    <property type="match status" value="1"/>
</dbReference>
<dbReference type="Gene3D" id="3.90.1150.10">
    <property type="entry name" value="Aspartate Aminotransferase, domain 1"/>
    <property type="match status" value="1"/>
</dbReference>
<dbReference type="Gene3D" id="3.40.640.10">
    <property type="entry name" value="Type I PLP-dependent aspartate aminotransferase-like (Major domain)"/>
    <property type="match status" value="1"/>
</dbReference>
<dbReference type="HAMAP" id="MF_03050">
    <property type="entry name" value="MOCOS"/>
    <property type="match status" value="1"/>
</dbReference>
<dbReference type="InterPro" id="IPR000192">
    <property type="entry name" value="Aminotrans_V_dom"/>
</dbReference>
<dbReference type="InterPro" id="IPR005302">
    <property type="entry name" value="MoCF_Sase_C"/>
</dbReference>
<dbReference type="InterPro" id="IPR028886">
    <property type="entry name" value="MoCo_sulfurase"/>
</dbReference>
<dbReference type="InterPro" id="IPR005303">
    <property type="entry name" value="MOCOS_middle"/>
</dbReference>
<dbReference type="InterPro" id="IPR015424">
    <property type="entry name" value="PyrdxlP-dep_Trfase"/>
</dbReference>
<dbReference type="InterPro" id="IPR015421">
    <property type="entry name" value="PyrdxlP-dep_Trfase_major"/>
</dbReference>
<dbReference type="InterPro" id="IPR015422">
    <property type="entry name" value="PyrdxlP-dep_Trfase_small"/>
</dbReference>
<dbReference type="InterPro" id="IPR011037">
    <property type="entry name" value="Pyrv_Knase-like_insert_dom_sf"/>
</dbReference>
<dbReference type="PANTHER" id="PTHR14237:SF19">
    <property type="entry name" value="MITOCHONDRIAL AMIDOXIME REDUCING COMPONENT 1"/>
    <property type="match status" value="1"/>
</dbReference>
<dbReference type="PANTHER" id="PTHR14237">
    <property type="entry name" value="MOLYBDOPTERIN COFACTOR SULFURASE MOSC"/>
    <property type="match status" value="1"/>
</dbReference>
<dbReference type="Pfam" id="PF00266">
    <property type="entry name" value="Aminotran_5"/>
    <property type="match status" value="1"/>
</dbReference>
<dbReference type="Pfam" id="PF03473">
    <property type="entry name" value="MOSC"/>
    <property type="match status" value="1"/>
</dbReference>
<dbReference type="Pfam" id="PF03476">
    <property type="entry name" value="MOSC_N"/>
    <property type="match status" value="1"/>
</dbReference>
<dbReference type="SUPFAM" id="SSF141673">
    <property type="entry name" value="MOSC N-terminal domain-like"/>
    <property type="match status" value="1"/>
</dbReference>
<dbReference type="SUPFAM" id="SSF50800">
    <property type="entry name" value="PK beta-barrel domain-like"/>
    <property type="match status" value="1"/>
</dbReference>
<dbReference type="SUPFAM" id="SSF53383">
    <property type="entry name" value="PLP-dependent transferases"/>
    <property type="match status" value="1"/>
</dbReference>
<dbReference type="PROSITE" id="PS51340">
    <property type="entry name" value="MOSC"/>
    <property type="match status" value="1"/>
</dbReference>
<keyword id="KW-0501">Molybdenum cofactor biosynthesis</keyword>
<keyword id="KW-0663">Pyridoxal phosphate</keyword>
<keyword id="KW-1185">Reference proteome</keyword>
<keyword id="KW-0808">Transferase</keyword>
<comment type="function">
    <text evidence="1">Sulfurates the molybdenum cofactor. Sulfation of molybdenum is essential for xanthine dehydrogenase (XDH) and aldehyde oxidase (ADO) enzymes in which molybdenum cofactor is liganded by 1 oxygen and 1 sulfur atom in active form.</text>
</comment>
<comment type="catalytic activity">
    <reaction evidence="1">
        <text>Mo-molybdopterin + L-cysteine + AH2 = thio-Mo-molybdopterin + L-alanine + A + H2O</text>
        <dbReference type="Rhea" id="RHEA:42636"/>
        <dbReference type="ChEBI" id="CHEBI:13193"/>
        <dbReference type="ChEBI" id="CHEBI:15377"/>
        <dbReference type="ChEBI" id="CHEBI:17499"/>
        <dbReference type="ChEBI" id="CHEBI:35235"/>
        <dbReference type="ChEBI" id="CHEBI:57972"/>
        <dbReference type="ChEBI" id="CHEBI:71302"/>
        <dbReference type="ChEBI" id="CHEBI:82685"/>
        <dbReference type="EC" id="2.8.1.9"/>
    </reaction>
</comment>
<comment type="cofactor">
    <cofactor evidence="1">
        <name>pyridoxal 5'-phosphate</name>
        <dbReference type="ChEBI" id="CHEBI:597326"/>
    </cofactor>
</comment>
<comment type="similarity">
    <text evidence="1">Belongs to the class-V pyridoxal-phosphate-dependent aminotransferase family. MOCOS subfamily.</text>
</comment>
<reference key="1">
    <citation type="journal article" date="2007" name="Science">
        <title>Genome sequence of Aedes aegypti, a major arbovirus vector.</title>
        <authorList>
            <person name="Nene V."/>
            <person name="Wortman J.R."/>
            <person name="Lawson D."/>
            <person name="Haas B.J."/>
            <person name="Kodira C.D."/>
            <person name="Tu Z.J."/>
            <person name="Loftus B.J."/>
            <person name="Xi Z."/>
            <person name="Megy K."/>
            <person name="Grabherr M."/>
            <person name="Ren Q."/>
            <person name="Zdobnov E.M."/>
            <person name="Lobo N.F."/>
            <person name="Campbell K.S."/>
            <person name="Brown S.E."/>
            <person name="Bonaldo M.F."/>
            <person name="Zhu J."/>
            <person name="Sinkins S.P."/>
            <person name="Hogenkamp D.G."/>
            <person name="Amedeo P."/>
            <person name="Arensburger P."/>
            <person name="Atkinson P.W."/>
            <person name="Bidwell S.L."/>
            <person name="Biedler J."/>
            <person name="Birney E."/>
            <person name="Bruggner R.V."/>
            <person name="Costas J."/>
            <person name="Coy M.R."/>
            <person name="Crabtree J."/>
            <person name="Crawford M."/>
            <person name="DeBruyn B."/>
            <person name="DeCaprio D."/>
            <person name="Eiglmeier K."/>
            <person name="Eisenstadt E."/>
            <person name="El-Dorry H."/>
            <person name="Gelbart W.M."/>
            <person name="Gomes S.L."/>
            <person name="Hammond M."/>
            <person name="Hannick L.I."/>
            <person name="Hogan J.R."/>
            <person name="Holmes M.H."/>
            <person name="Jaffe D."/>
            <person name="Johnston S.J."/>
            <person name="Kennedy R.C."/>
            <person name="Koo H."/>
            <person name="Kravitz S."/>
            <person name="Kriventseva E.V."/>
            <person name="Kulp D."/>
            <person name="Labutti K."/>
            <person name="Lee E."/>
            <person name="Li S."/>
            <person name="Lovin D.D."/>
            <person name="Mao C."/>
            <person name="Mauceli E."/>
            <person name="Menck C.F."/>
            <person name="Miller J.R."/>
            <person name="Montgomery P."/>
            <person name="Mori A."/>
            <person name="Nascimento A.L."/>
            <person name="Naveira H.F."/>
            <person name="Nusbaum C."/>
            <person name="O'Leary S.B."/>
            <person name="Orvis J."/>
            <person name="Pertea M."/>
            <person name="Quesneville H."/>
            <person name="Reidenbach K.R."/>
            <person name="Rogers Y.-H.C."/>
            <person name="Roth C.W."/>
            <person name="Schneider J.R."/>
            <person name="Schatz M."/>
            <person name="Shumway M."/>
            <person name="Stanke M."/>
            <person name="Stinson E.O."/>
            <person name="Tubio J.M.C."/>
            <person name="Vanzee J.P."/>
            <person name="Verjovski-Almeida S."/>
            <person name="Werner D."/>
            <person name="White O.R."/>
            <person name="Wyder S."/>
            <person name="Zeng Q."/>
            <person name="Zhao Q."/>
            <person name="Zhao Y."/>
            <person name="Hill C.A."/>
            <person name="Raikhel A.S."/>
            <person name="Soares M.B."/>
            <person name="Knudson D.L."/>
            <person name="Lee N.H."/>
            <person name="Galagan J."/>
            <person name="Salzberg S.L."/>
            <person name="Paulsen I.T."/>
            <person name="Dimopoulos G."/>
            <person name="Collins F.H."/>
            <person name="Bruce B."/>
            <person name="Fraser-Liggett C.M."/>
            <person name="Severson D.W."/>
        </authorList>
    </citation>
    <scope>NUCLEOTIDE SEQUENCE [LARGE SCALE GENOMIC DNA]</scope>
    <source>
        <strain>LVPib12</strain>
    </source>
</reference>
<accession>Q16P90</accession>
<protein>
    <recommendedName>
        <fullName evidence="1">Molybdenum cofactor sulfurase 3</fullName>
        <shortName evidence="1">MCS 3</shortName>
        <shortName evidence="1">MOS 3</shortName>
        <shortName evidence="1">MoCo sulfurase 3</shortName>
        <ecNumber evidence="1">2.8.1.9</ecNumber>
    </recommendedName>
    <alternativeName>
        <fullName evidence="1">Molybdenum cofactor sulfurtransferase 3</fullName>
    </alternativeName>
    <alternativeName>
        <fullName evidence="1">Protein maroon-like 3</fullName>
        <shortName evidence="1">Ma-l 3</shortName>
    </alternativeName>
</protein>
<name>MOCO3_AEDAE</name>
<evidence type="ECO:0000255" key="1">
    <source>
        <dbReference type="HAMAP-Rule" id="MF_03050"/>
    </source>
</evidence>
<sequence length="764" mass="86653">MEAMMNFTSQYTVEEALAIEKEFSRLKEKCYLDHAGTTLYADSQIRSVCEGLAQNLYCNPHTSRTTEDLLDQVRYRVLRHFNTRSSEYSLIFTSGTTASLKLLAESYEFAPEGAFVYLKDSHTSVLGMREIVGTERIYPVEREQLLKELDSSERSDSEHSSLIVFPAQCNFNGVKYPLELVRKIQRNGISGYGKERFRVCLDAASFVSTSFLDLSKYQPDFVCLSFYKIFGYPTGLGALLVHHTAADQLRKKYYGGGTVKIAMAGRNFHVKRDPLVERFEDGTLAFTSIIALLQGFETLERLVPSTAGLRTIERISQQTFHLGRYCYNRLKALRHSNGNAVVKLYHDTGFEDQGLQGGIVNFNILHEDGTYVGFAEVSYMASLHNILLRTGCFCNPGACQRHLQLSDEDVLKQFDAGHVCGDANDLIDGQPTGSVRVSFGYMTRKEDIDCLLEMVEKCYIRKTIANGFTRTQIVSKYKSYDQPRLKMICLFPIKSCGAFKVTTRWPLSRRGLKHDREFVIVDENGVALTQKKLTEMCLIRPQINLKTNEMTLSHPSMDDFVLDLDLLGESQRIKLCQTKVCQDNVQAIDCGDQVAEWISVALQTSGLRLLKQSDEEVRTFQQSKQEIALANQAQFLLINQASVRWLADKVPDWDELHEEPTLESLVDRFRGNLIVETPTSMEECDWKRVTIGYLEFAVDGPCSRCQMICIDQGTGVKTTEPLRTIGREFKGKMRFGIYLSHVNPLRDGSEQWLYCNSVVEGLSE</sequence>
<organism>
    <name type="scientific">Aedes aegypti</name>
    <name type="common">Yellowfever mosquito</name>
    <name type="synonym">Culex aegypti</name>
    <dbReference type="NCBI Taxonomy" id="7159"/>
    <lineage>
        <taxon>Eukaryota</taxon>
        <taxon>Metazoa</taxon>
        <taxon>Ecdysozoa</taxon>
        <taxon>Arthropoda</taxon>
        <taxon>Hexapoda</taxon>
        <taxon>Insecta</taxon>
        <taxon>Pterygota</taxon>
        <taxon>Neoptera</taxon>
        <taxon>Endopterygota</taxon>
        <taxon>Diptera</taxon>
        <taxon>Nematocera</taxon>
        <taxon>Culicoidea</taxon>
        <taxon>Culicidae</taxon>
        <taxon>Culicinae</taxon>
        <taxon>Aedini</taxon>
        <taxon>Aedes</taxon>
        <taxon>Stegomyia</taxon>
    </lineage>
</organism>
<proteinExistence type="inferred from homology"/>